<organism>
    <name type="scientific">Mus musculus</name>
    <name type="common">Mouse</name>
    <dbReference type="NCBI Taxonomy" id="10090"/>
    <lineage>
        <taxon>Eukaryota</taxon>
        <taxon>Metazoa</taxon>
        <taxon>Chordata</taxon>
        <taxon>Craniata</taxon>
        <taxon>Vertebrata</taxon>
        <taxon>Euteleostomi</taxon>
        <taxon>Mammalia</taxon>
        <taxon>Eutheria</taxon>
        <taxon>Euarchontoglires</taxon>
        <taxon>Glires</taxon>
        <taxon>Rodentia</taxon>
        <taxon>Myomorpha</taxon>
        <taxon>Muroidea</taxon>
        <taxon>Muridae</taxon>
        <taxon>Murinae</taxon>
        <taxon>Mus</taxon>
        <taxon>Mus</taxon>
    </lineage>
</organism>
<evidence type="ECO:0000250" key="1">
    <source>
        <dbReference type="UniProtKB" id="P00918"/>
    </source>
</evidence>
<evidence type="ECO:0000250" key="2">
    <source>
        <dbReference type="UniProtKB" id="P00921"/>
    </source>
</evidence>
<evidence type="ECO:0000250" key="3">
    <source>
        <dbReference type="UniProtKB" id="P27139"/>
    </source>
</evidence>
<evidence type="ECO:0000255" key="4">
    <source>
        <dbReference type="PROSITE-ProRule" id="PRU01134"/>
    </source>
</evidence>
<evidence type="ECO:0000305" key="5"/>
<evidence type="ECO:0007744" key="6">
    <source>
    </source>
</evidence>
<feature type="initiator methionine" description="Removed" evidence="1">
    <location>
        <position position="1"/>
    </location>
</feature>
<feature type="chain" id="PRO_0000077419" description="Carbonic anhydrase 2">
    <location>
        <begin position="2"/>
        <end position="260"/>
    </location>
</feature>
<feature type="domain" description="Alpha-carbonic anhydrase" evidence="4">
    <location>
        <begin position="3"/>
        <end position="259"/>
    </location>
</feature>
<feature type="active site" description="Proton acceptor" evidence="1">
    <location>
        <position position="64"/>
    </location>
</feature>
<feature type="active site" evidence="1">
    <location>
        <position position="67"/>
    </location>
</feature>
<feature type="active site" evidence="1">
    <location>
        <position position="127"/>
    </location>
</feature>
<feature type="binding site" evidence="1">
    <location>
        <position position="94"/>
    </location>
    <ligand>
        <name>Zn(2+)</name>
        <dbReference type="ChEBI" id="CHEBI:29105"/>
        <note>catalytic</note>
    </ligand>
</feature>
<feature type="binding site" evidence="1">
    <location>
        <position position="96"/>
    </location>
    <ligand>
        <name>Zn(2+)</name>
        <dbReference type="ChEBI" id="CHEBI:29105"/>
        <note>catalytic</note>
    </ligand>
</feature>
<feature type="binding site" evidence="1">
    <location>
        <position position="119"/>
    </location>
    <ligand>
        <name>Zn(2+)</name>
        <dbReference type="ChEBI" id="CHEBI:29105"/>
        <note>catalytic</note>
    </ligand>
</feature>
<feature type="binding site" evidence="1">
    <location>
        <begin position="198"/>
        <end position="199"/>
    </location>
    <ligand>
        <name>substrate</name>
    </ligand>
</feature>
<feature type="modified residue" description="N-acetylserine" evidence="1">
    <location>
        <position position="2"/>
    </location>
</feature>
<feature type="modified residue" description="Phosphoserine" evidence="3">
    <location>
        <position position="2"/>
    </location>
</feature>
<feature type="modified residue" description="Phosphoserine" evidence="6">
    <location>
        <position position="87"/>
    </location>
</feature>
<feature type="modified residue" description="Phosphoserine" evidence="1">
    <location>
        <position position="165"/>
    </location>
</feature>
<feature type="sequence conflict" description="In Ref. 1; AAA37356 and 4; AAH55291." evidence="5" ref="1 4">
    <original>Q</original>
    <variation>H</variation>
    <location>
        <position position="39"/>
    </location>
</feature>
<feature type="sequence conflict" description="In Ref. 1; AAA37356 and 2; AAA37357." evidence="5" ref="1 2">
    <original>I</original>
    <variation>Y</variation>
    <location>
        <position position="145"/>
    </location>
</feature>
<feature type="sequence conflict" description="In Ref. 2; AAA37357." evidence="5" ref="2">
    <original>E</original>
    <variation>D</variation>
    <location>
        <position position="213"/>
    </location>
</feature>
<name>CAH2_MOUSE</name>
<proteinExistence type="evidence at protein level"/>
<gene>
    <name type="primary">Ca2</name>
    <name type="synonym">Car2</name>
</gene>
<sequence length="260" mass="29033">MSHHWGYSKHNGPENWHKDFPIANGDRQSPVDIDTATAQHDPALQPLLISYDKAASKSIVNNGHSFNVEFDDSQDNAVLKGGPLSDSYRLIQFHFHWGSSDGQGSEHTVNKKKYAAELHLVHWNTKYGDFGKAVQQPDGLAVLGIFLKIGPASQGLQKVLEALHSIKTKGKRAAFANFDPCSLLPGNLDYWTYPGSLTTPPLLECVTWIVLREPITVSSEQMSHFRTLNFNEEGDAEEAMVDNWRPAQPLKNRKIKASFK</sequence>
<comment type="function">
    <text evidence="1">Catalyzes the reversible hydration of carbon dioxide (By similarity). Can also hydrate cyanamide to urea (By similarity). Involved in the regulation of fluid secretion into the anterior chamber of the eye (By similarity). Essential for bone resorption and osteoclast differentiation (By similarity). Contributes to intracellular pH regulation in the duodenal upper villous epithelium during proton-coupled peptide absorption (By similarity). Stimulates the chloride-bicarbonate exchange activity of SLC26A6 (By similarity).</text>
</comment>
<comment type="catalytic activity">
    <reaction evidence="1">
        <text>hydrogencarbonate + H(+) = CO2 + H2O</text>
        <dbReference type="Rhea" id="RHEA:10748"/>
        <dbReference type="ChEBI" id="CHEBI:15377"/>
        <dbReference type="ChEBI" id="CHEBI:15378"/>
        <dbReference type="ChEBI" id="CHEBI:16526"/>
        <dbReference type="ChEBI" id="CHEBI:17544"/>
        <dbReference type="EC" id="4.2.1.1"/>
    </reaction>
</comment>
<comment type="catalytic activity">
    <reaction evidence="1">
        <text>urea = cyanamide + H2O</text>
        <dbReference type="Rhea" id="RHEA:23056"/>
        <dbReference type="ChEBI" id="CHEBI:15377"/>
        <dbReference type="ChEBI" id="CHEBI:16199"/>
        <dbReference type="ChEBI" id="CHEBI:16698"/>
        <dbReference type="EC" id="4.2.1.69"/>
    </reaction>
</comment>
<comment type="cofactor">
    <cofactor evidence="2">
        <name>Zn(2+)</name>
        <dbReference type="ChEBI" id="CHEBI:29105"/>
    </cofactor>
</comment>
<comment type="activity regulation">
    <text evidence="1">Inhibited by acetazolamide.</text>
</comment>
<comment type="subunit">
    <text evidence="1">Interacts with SLC4A4 (By similarity). Interaction with SLC4A7 regulates SLC4A7 transporter activity (By similarity). Interacts with SLC26A6 (By similarity).</text>
</comment>
<comment type="subcellular location">
    <subcellularLocation>
        <location evidence="1">Cytoplasm</location>
    </subcellularLocation>
    <subcellularLocation>
        <location evidence="1">Cell membrane</location>
    </subcellularLocation>
    <text evidence="1">Colocalized with SLC26A6 at the surface of the cell membrane in order to form a bicarbonate transport metabolon. Displaced from the cytosolic surface of the cell membrane by PKC in phorbol myristate acetate (PMA)-induced cells.</text>
</comment>
<comment type="similarity">
    <text evidence="5">Belongs to the alpha-carbonic anhydrase family.</text>
</comment>
<keyword id="KW-0007">Acetylation</keyword>
<keyword id="KW-1003">Cell membrane</keyword>
<keyword id="KW-0963">Cytoplasm</keyword>
<keyword id="KW-0903">Direct protein sequencing</keyword>
<keyword id="KW-0456">Lyase</keyword>
<keyword id="KW-0472">Membrane</keyword>
<keyword id="KW-0479">Metal-binding</keyword>
<keyword id="KW-0597">Phosphoprotein</keyword>
<keyword id="KW-1185">Reference proteome</keyword>
<keyword id="KW-0862">Zinc</keyword>
<protein>
    <recommendedName>
        <fullName>Carbonic anhydrase 2</fullName>
        <ecNumber evidence="1">4.2.1.1</ecNumber>
    </recommendedName>
    <alternativeName>
        <fullName>Carbonate dehydratase II</fullName>
    </alternativeName>
    <alternativeName>
        <fullName>Carbonic anhydrase II</fullName>
        <shortName>CA-II</shortName>
    </alternativeName>
    <alternativeName>
        <fullName>Cyanamide hydratase CA2</fullName>
        <ecNumber evidence="1">4.2.1.69</ecNumber>
    </alternativeName>
</protein>
<reference key="1">
    <citation type="journal article" date="1983" name="Gene">
        <title>The nucleotide sequence and derived amino acid sequence of cDNA coding for mouse carbonic anhydrase II.</title>
        <authorList>
            <person name="Curtis P.J."/>
            <person name="Withers E."/>
            <person name="Demuth D."/>
            <person name="Watt R."/>
            <person name="Venta P.J."/>
            <person name="Tashian R.E."/>
        </authorList>
    </citation>
    <scope>NUCLEOTIDE SEQUENCE [MRNA]</scope>
</reference>
<reference key="2">
    <citation type="journal article" date="1985" name="J. Biol. Chem.">
        <title>Structure and exon to protein domain relationships of the mouse carbonic anhydrase II gene.</title>
        <authorList>
            <person name="Venta P.J."/>
            <person name="Montgomery J.C."/>
            <person name="Hewett-Emmett D."/>
            <person name="Wiebauer K."/>
            <person name="Tashian R.E."/>
        </authorList>
    </citation>
    <scope>NUCLEOTIDE SEQUENCE [GENOMIC DNA]</scope>
</reference>
<reference key="3">
    <citation type="journal article" date="2005" name="Science">
        <title>The transcriptional landscape of the mammalian genome.</title>
        <authorList>
            <person name="Carninci P."/>
            <person name="Kasukawa T."/>
            <person name="Katayama S."/>
            <person name="Gough J."/>
            <person name="Frith M.C."/>
            <person name="Maeda N."/>
            <person name="Oyama R."/>
            <person name="Ravasi T."/>
            <person name="Lenhard B."/>
            <person name="Wells C."/>
            <person name="Kodzius R."/>
            <person name="Shimokawa K."/>
            <person name="Bajic V.B."/>
            <person name="Brenner S.E."/>
            <person name="Batalov S."/>
            <person name="Forrest A.R."/>
            <person name="Zavolan M."/>
            <person name="Davis M.J."/>
            <person name="Wilming L.G."/>
            <person name="Aidinis V."/>
            <person name="Allen J.E."/>
            <person name="Ambesi-Impiombato A."/>
            <person name="Apweiler R."/>
            <person name="Aturaliya R.N."/>
            <person name="Bailey T.L."/>
            <person name="Bansal M."/>
            <person name="Baxter L."/>
            <person name="Beisel K.W."/>
            <person name="Bersano T."/>
            <person name="Bono H."/>
            <person name="Chalk A.M."/>
            <person name="Chiu K.P."/>
            <person name="Choudhary V."/>
            <person name="Christoffels A."/>
            <person name="Clutterbuck D.R."/>
            <person name="Crowe M.L."/>
            <person name="Dalla E."/>
            <person name="Dalrymple B.P."/>
            <person name="de Bono B."/>
            <person name="Della Gatta G."/>
            <person name="di Bernardo D."/>
            <person name="Down T."/>
            <person name="Engstrom P."/>
            <person name="Fagiolini M."/>
            <person name="Faulkner G."/>
            <person name="Fletcher C.F."/>
            <person name="Fukushima T."/>
            <person name="Furuno M."/>
            <person name="Futaki S."/>
            <person name="Gariboldi M."/>
            <person name="Georgii-Hemming P."/>
            <person name="Gingeras T.R."/>
            <person name="Gojobori T."/>
            <person name="Green R.E."/>
            <person name="Gustincich S."/>
            <person name="Harbers M."/>
            <person name="Hayashi Y."/>
            <person name="Hensch T.K."/>
            <person name="Hirokawa N."/>
            <person name="Hill D."/>
            <person name="Huminiecki L."/>
            <person name="Iacono M."/>
            <person name="Ikeo K."/>
            <person name="Iwama A."/>
            <person name="Ishikawa T."/>
            <person name="Jakt M."/>
            <person name="Kanapin A."/>
            <person name="Katoh M."/>
            <person name="Kawasawa Y."/>
            <person name="Kelso J."/>
            <person name="Kitamura H."/>
            <person name="Kitano H."/>
            <person name="Kollias G."/>
            <person name="Krishnan S.P."/>
            <person name="Kruger A."/>
            <person name="Kummerfeld S.K."/>
            <person name="Kurochkin I.V."/>
            <person name="Lareau L.F."/>
            <person name="Lazarevic D."/>
            <person name="Lipovich L."/>
            <person name="Liu J."/>
            <person name="Liuni S."/>
            <person name="McWilliam S."/>
            <person name="Madan Babu M."/>
            <person name="Madera M."/>
            <person name="Marchionni L."/>
            <person name="Matsuda H."/>
            <person name="Matsuzawa S."/>
            <person name="Miki H."/>
            <person name="Mignone F."/>
            <person name="Miyake S."/>
            <person name="Morris K."/>
            <person name="Mottagui-Tabar S."/>
            <person name="Mulder N."/>
            <person name="Nakano N."/>
            <person name="Nakauchi H."/>
            <person name="Ng P."/>
            <person name="Nilsson R."/>
            <person name="Nishiguchi S."/>
            <person name="Nishikawa S."/>
            <person name="Nori F."/>
            <person name="Ohara O."/>
            <person name="Okazaki Y."/>
            <person name="Orlando V."/>
            <person name="Pang K.C."/>
            <person name="Pavan W.J."/>
            <person name="Pavesi G."/>
            <person name="Pesole G."/>
            <person name="Petrovsky N."/>
            <person name="Piazza S."/>
            <person name="Reed J."/>
            <person name="Reid J.F."/>
            <person name="Ring B.Z."/>
            <person name="Ringwald M."/>
            <person name="Rost B."/>
            <person name="Ruan Y."/>
            <person name="Salzberg S.L."/>
            <person name="Sandelin A."/>
            <person name="Schneider C."/>
            <person name="Schoenbach C."/>
            <person name="Sekiguchi K."/>
            <person name="Semple C.A."/>
            <person name="Seno S."/>
            <person name="Sessa L."/>
            <person name="Sheng Y."/>
            <person name="Shibata Y."/>
            <person name="Shimada H."/>
            <person name="Shimada K."/>
            <person name="Silva D."/>
            <person name="Sinclair B."/>
            <person name="Sperling S."/>
            <person name="Stupka E."/>
            <person name="Sugiura K."/>
            <person name="Sultana R."/>
            <person name="Takenaka Y."/>
            <person name="Taki K."/>
            <person name="Tammoja K."/>
            <person name="Tan S.L."/>
            <person name="Tang S."/>
            <person name="Taylor M.S."/>
            <person name="Tegner J."/>
            <person name="Teichmann S.A."/>
            <person name="Ueda H.R."/>
            <person name="van Nimwegen E."/>
            <person name="Verardo R."/>
            <person name="Wei C.L."/>
            <person name="Yagi K."/>
            <person name="Yamanishi H."/>
            <person name="Zabarovsky E."/>
            <person name="Zhu S."/>
            <person name="Zimmer A."/>
            <person name="Hide W."/>
            <person name="Bult C."/>
            <person name="Grimmond S.M."/>
            <person name="Teasdale R.D."/>
            <person name="Liu E.T."/>
            <person name="Brusic V."/>
            <person name="Quackenbush J."/>
            <person name="Wahlestedt C."/>
            <person name="Mattick J.S."/>
            <person name="Hume D.A."/>
            <person name="Kai C."/>
            <person name="Sasaki D."/>
            <person name="Tomaru Y."/>
            <person name="Fukuda S."/>
            <person name="Kanamori-Katayama M."/>
            <person name="Suzuki M."/>
            <person name="Aoki J."/>
            <person name="Arakawa T."/>
            <person name="Iida J."/>
            <person name="Imamura K."/>
            <person name="Itoh M."/>
            <person name="Kato T."/>
            <person name="Kawaji H."/>
            <person name="Kawagashira N."/>
            <person name="Kawashima T."/>
            <person name="Kojima M."/>
            <person name="Kondo S."/>
            <person name="Konno H."/>
            <person name="Nakano K."/>
            <person name="Ninomiya N."/>
            <person name="Nishio T."/>
            <person name="Okada M."/>
            <person name="Plessy C."/>
            <person name="Shibata K."/>
            <person name="Shiraki T."/>
            <person name="Suzuki S."/>
            <person name="Tagami M."/>
            <person name="Waki K."/>
            <person name="Watahiki A."/>
            <person name="Okamura-Oho Y."/>
            <person name="Suzuki H."/>
            <person name="Kawai J."/>
            <person name="Hayashizaki Y."/>
        </authorList>
    </citation>
    <scope>NUCLEOTIDE SEQUENCE [LARGE SCALE MRNA]</scope>
    <source>
        <strain>C57BL/6J</strain>
        <tissue>Kidney</tissue>
    </source>
</reference>
<reference key="4">
    <citation type="journal article" date="2004" name="Genome Res.">
        <title>The status, quality, and expansion of the NIH full-length cDNA project: the Mammalian Gene Collection (MGC).</title>
        <authorList>
            <consortium name="The MGC Project Team"/>
        </authorList>
    </citation>
    <scope>NUCLEOTIDE SEQUENCE [LARGE SCALE MRNA]</scope>
    <source>
        <strain>FVB/N</strain>
        <tissue>Colon</tissue>
    </source>
</reference>
<reference key="5">
    <citation type="journal article" date="1985" name="Biochim. Biophys. Acta">
        <title>Comparison of the 5' regions of human and mouse carbonic anhydrase II genes and identification of possible regulatory elements.</title>
        <authorList>
            <person name="Venta P.J."/>
            <person name="Montgomery J.C."/>
            <person name="Hewett-Emmett D."/>
            <person name="Tashian R.E."/>
        </authorList>
    </citation>
    <scope>NUCLEOTIDE SEQUENCE [GENOMIC DNA] OF 1-77</scope>
</reference>
<reference key="6">
    <citation type="submission" date="2007-04" db="UniProtKB">
        <authorList>
            <person name="Lubec G."/>
            <person name="Klug S."/>
            <person name="Kang S.U."/>
        </authorList>
    </citation>
    <scope>PROTEIN SEQUENCE OF 19-53; 58-80; 90-111; 114-126; 133-167 AND 213-226</scope>
    <scope>IDENTIFICATION BY MASS SPECTROMETRY</scope>
    <source>
        <strain>C57BL/6J</strain>
        <tissue>Brain</tissue>
        <tissue>Hippocampus</tissue>
    </source>
</reference>
<reference key="7">
    <citation type="journal article" date="1983" name="J. Biol. Chem.">
        <title>Cloning of mouse carbonic anhydrase mRNA and its induction in mouse erythroleukemic cells.</title>
        <authorList>
            <person name="Curtis P.J."/>
        </authorList>
    </citation>
    <scope>NUCLEOTIDE SEQUENCE [MRNA] OF 155-178 AND 214-240</scope>
</reference>
<reference key="8">
    <citation type="journal article" date="1984" name="Ann. N. Y. Acad. Sci.">
        <title>Organization of the mouse and human carbonic anhydrase II genes.</title>
        <authorList>
            <person name="Venta P.J."/>
            <person name="Montgomery J.C."/>
            <person name="Wiebauer K."/>
            <person name="Hewett-Emmett D."/>
            <person name="Tashian R.E."/>
        </authorList>
    </citation>
    <scope>NUCLEOTIDE SEQUENCE [MRNA] OF 241-260</scope>
</reference>
<reference key="9">
    <citation type="journal article" date="2010" name="Am. J. Physiol.">
        <title>Putative anion transporter-1 (Pat-1, Slc26a6) contributes to intracellular pH regulation during H+-dipeptide transport in duodenal villous epithelium.</title>
        <authorList>
            <person name="Simpson J.E."/>
            <person name="Walker N.M."/>
            <person name="Supuran C.T."/>
            <person name="Soleimani M."/>
            <person name="Clarke L.L."/>
        </authorList>
    </citation>
    <scope>FUNCTION</scope>
</reference>
<reference key="10">
    <citation type="journal article" date="2010" name="Cell">
        <title>A tissue-specific atlas of mouse protein phosphorylation and expression.</title>
        <authorList>
            <person name="Huttlin E.L."/>
            <person name="Jedrychowski M.P."/>
            <person name="Elias J.E."/>
            <person name="Goswami T."/>
            <person name="Rad R."/>
            <person name="Beausoleil S.A."/>
            <person name="Villen J."/>
            <person name="Haas W."/>
            <person name="Sowa M.E."/>
            <person name="Gygi S.P."/>
        </authorList>
    </citation>
    <scope>PHOSPHORYLATION [LARGE SCALE ANALYSIS] AT SER-87</scope>
    <scope>IDENTIFICATION BY MASS SPECTROMETRY [LARGE SCALE ANALYSIS]</scope>
    <source>
        <tissue>Brain</tissue>
        <tissue>Brown adipose tissue</tissue>
        <tissue>Heart</tissue>
        <tissue>Kidney</tissue>
        <tissue>Liver</tissue>
        <tissue>Lung</tissue>
        <tissue>Pancreas</tissue>
        <tissue>Spleen</tissue>
        <tissue>Testis</tissue>
    </source>
</reference>
<accession>P00920</accession>
<accession>Q6LDQ7</accession>
<accession>Q7TPE1</accession>
<accession>Q9DCT3</accession>
<accession>Q9DCY9</accession>
<dbReference type="EC" id="4.2.1.1" evidence="1"/>
<dbReference type="EC" id="4.2.1.69" evidence="1"/>
<dbReference type="EMBL" id="K00811">
    <property type="protein sequence ID" value="AAA37356.1"/>
    <property type="molecule type" value="mRNA"/>
</dbReference>
<dbReference type="EMBL" id="M81022">
    <property type="protein sequence ID" value="AAA37357.1"/>
    <property type="molecule type" value="Genomic_DNA"/>
</dbReference>
<dbReference type="EMBL" id="M81016">
    <property type="protein sequence ID" value="AAA37357.1"/>
    <property type="status" value="JOINED"/>
    <property type="molecule type" value="Genomic_DNA"/>
</dbReference>
<dbReference type="EMBL" id="M81017">
    <property type="protein sequence ID" value="AAA37357.1"/>
    <property type="status" value="JOINED"/>
    <property type="molecule type" value="Genomic_DNA"/>
</dbReference>
<dbReference type="EMBL" id="M81018">
    <property type="protein sequence ID" value="AAA37357.1"/>
    <property type="status" value="JOINED"/>
    <property type="molecule type" value="Genomic_DNA"/>
</dbReference>
<dbReference type="EMBL" id="M81019">
    <property type="protein sequence ID" value="AAA37357.1"/>
    <property type="status" value="JOINED"/>
    <property type="molecule type" value="Genomic_DNA"/>
</dbReference>
<dbReference type="EMBL" id="M81020">
    <property type="protein sequence ID" value="AAA37357.1"/>
    <property type="status" value="JOINED"/>
    <property type="molecule type" value="Genomic_DNA"/>
</dbReference>
<dbReference type="EMBL" id="M81021">
    <property type="protein sequence ID" value="AAA37357.1"/>
    <property type="status" value="JOINED"/>
    <property type="molecule type" value="Genomic_DNA"/>
</dbReference>
<dbReference type="EMBL" id="AK002333">
    <property type="protein sequence ID" value="BAB22019.1"/>
    <property type="molecule type" value="mRNA"/>
</dbReference>
<dbReference type="EMBL" id="AK002498">
    <property type="protein sequence ID" value="BAB22146.2"/>
    <property type="molecule type" value="mRNA"/>
</dbReference>
<dbReference type="EMBL" id="BC055291">
    <property type="protein sequence ID" value="AAH55291.1"/>
    <property type="molecule type" value="mRNA"/>
</dbReference>
<dbReference type="EMBL" id="M25944">
    <property type="protein sequence ID" value="AAA39505.1"/>
    <property type="molecule type" value="mRNA"/>
</dbReference>
<dbReference type="CCDS" id="CCDS17251.1"/>
<dbReference type="PIR" id="A23900">
    <property type="entry name" value="CRMS2"/>
</dbReference>
<dbReference type="RefSeq" id="NP_033931.4">
    <property type="nucleotide sequence ID" value="NM_009801.4"/>
</dbReference>
<dbReference type="RefSeq" id="XP_006530113.1">
    <property type="nucleotide sequence ID" value="XM_006530050.1"/>
</dbReference>
<dbReference type="SMR" id="P00920"/>
<dbReference type="BioGRID" id="198483">
    <property type="interactions" value="13"/>
</dbReference>
<dbReference type="FunCoup" id="P00920">
    <property type="interactions" value="424"/>
</dbReference>
<dbReference type="IntAct" id="P00920">
    <property type="interactions" value="2"/>
</dbReference>
<dbReference type="STRING" id="10090.ENSMUSP00000029078"/>
<dbReference type="ChEMBL" id="CHEMBL3689"/>
<dbReference type="GlyGen" id="P00920">
    <property type="glycosylation" value="1 site, 1 O-linked glycan (1 site)"/>
</dbReference>
<dbReference type="iPTMnet" id="P00920"/>
<dbReference type="PhosphoSitePlus" id="P00920"/>
<dbReference type="SwissPalm" id="P00920"/>
<dbReference type="CPTAC" id="non-CPTAC-3303"/>
<dbReference type="CPTAC" id="non-CPTAC-3365"/>
<dbReference type="jPOST" id="P00920"/>
<dbReference type="PaxDb" id="10090-ENSMUSP00000029078"/>
<dbReference type="PeptideAtlas" id="P00920"/>
<dbReference type="ProteomicsDB" id="265421"/>
<dbReference type="Pumba" id="P00920"/>
<dbReference type="Antibodypedia" id="677">
    <property type="antibodies" value="707 antibodies from 43 providers"/>
</dbReference>
<dbReference type="DNASU" id="12349"/>
<dbReference type="Ensembl" id="ENSMUST00000029078.9">
    <property type="protein sequence ID" value="ENSMUSP00000029078.8"/>
    <property type="gene ID" value="ENSMUSG00000027562.13"/>
</dbReference>
<dbReference type="GeneID" id="12349"/>
<dbReference type="KEGG" id="mmu:12349"/>
<dbReference type="UCSC" id="uc008oqt.2">
    <property type="organism name" value="mouse"/>
</dbReference>
<dbReference type="AGR" id="MGI:88269"/>
<dbReference type="CTD" id="12349"/>
<dbReference type="MGI" id="MGI:88269">
    <property type="gene designation" value="Car2"/>
</dbReference>
<dbReference type="VEuPathDB" id="HostDB:ENSMUSG00000027562"/>
<dbReference type="eggNOG" id="KOG0382">
    <property type="taxonomic scope" value="Eukaryota"/>
</dbReference>
<dbReference type="GeneTree" id="ENSGT00940000160385"/>
<dbReference type="HOGENOM" id="CLU_039326_2_1_1"/>
<dbReference type="InParanoid" id="P00920"/>
<dbReference type="OMA" id="INPHWKV"/>
<dbReference type="OrthoDB" id="429145at2759"/>
<dbReference type="PhylomeDB" id="P00920"/>
<dbReference type="TreeFam" id="TF316425"/>
<dbReference type="Reactome" id="R-MMU-1237044">
    <property type="pathway name" value="Erythrocytes take up carbon dioxide and release oxygen"/>
</dbReference>
<dbReference type="Reactome" id="R-MMU-1247673">
    <property type="pathway name" value="Erythrocytes take up oxygen and release carbon dioxide"/>
</dbReference>
<dbReference type="Reactome" id="R-MMU-1475029">
    <property type="pathway name" value="Reversible hydration of carbon dioxide"/>
</dbReference>
<dbReference type="BioGRID-ORCS" id="12349">
    <property type="hits" value="2 hits in 78 CRISPR screens"/>
</dbReference>
<dbReference type="ChiTaRS" id="Car2">
    <property type="organism name" value="mouse"/>
</dbReference>
<dbReference type="PRO" id="PR:P00920"/>
<dbReference type="Proteomes" id="UP000000589">
    <property type="component" value="Chromosome 3"/>
</dbReference>
<dbReference type="RNAct" id="P00920">
    <property type="molecule type" value="protein"/>
</dbReference>
<dbReference type="Bgee" id="ENSMUSG00000027562">
    <property type="expression patterns" value="Expressed in fetal liver hematopoietic progenitor cell and 274 other cell types or tissues"/>
</dbReference>
<dbReference type="ExpressionAtlas" id="P00920">
    <property type="expression patterns" value="baseline and differential"/>
</dbReference>
<dbReference type="GO" id="GO:0045177">
    <property type="term" value="C:apical part of cell"/>
    <property type="evidence" value="ECO:0007669"/>
    <property type="project" value="Ensembl"/>
</dbReference>
<dbReference type="GO" id="GO:0030424">
    <property type="term" value="C:axon"/>
    <property type="evidence" value="ECO:0007669"/>
    <property type="project" value="Ensembl"/>
</dbReference>
<dbReference type="GO" id="GO:0016323">
    <property type="term" value="C:basolateral plasma membrane"/>
    <property type="evidence" value="ECO:0007669"/>
    <property type="project" value="Ensembl"/>
</dbReference>
<dbReference type="GO" id="GO:0005737">
    <property type="term" value="C:cytoplasm"/>
    <property type="evidence" value="ECO:0000250"/>
    <property type="project" value="UniProtKB"/>
</dbReference>
<dbReference type="GO" id="GO:0005829">
    <property type="term" value="C:cytosol"/>
    <property type="evidence" value="ECO:0000314"/>
    <property type="project" value="UniProtKB"/>
</dbReference>
<dbReference type="GO" id="GO:0005615">
    <property type="term" value="C:extracellular space"/>
    <property type="evidence" value="ECO:0007669"/>
    <property type="project" value="Ensembl"/>
</dbReference>
<dbReference type="GO" id="GO:0005902">
    <property type="term" value="C:microvillus"/>
    <property type="evidence" value="ECO:0007669"/>
    <property type="project" value="Ensembl"/>
</dbReference>
<dbReference type="GO" id="GO:0043209">
    <property type="term" value="C:myelin sheath"/>
    <property type="evidence" value="ECO:0000314"/>
    <property type="project" value="MGI"/>
</dbReference>
<dbReference type="GO" id="GO:0005886">
    <property type="term" value="C:plasma membrane"/>
    <property type="evidence" value="ECO:0000250"/>
    <property type="project" value="UniProtKB"/>
</dbReference>
<dbReference type="GO" id="GO:0004064">
    <property type="term" value="F:arylesterase activity"/>
    <property type="evidence" value="ECO:0007669"/>
    <property type="project" value="Ensembl"/>
</dbReference>
<dbReference type="GO" id="GO:0004089">
    <property type="term" value="F:carbonate dehydratase activity"/>
    <property type="evidence" value="ECO:0000314"/>
    <property type="project" value="MGI"/>
</dbReference>
<dbReference type="GO" id="GO:0018820">
    <property type="term" value="F:cyanamide hydratase activity"/>
    <property type="evidence" value="ECO:0007669"/>
    <property type="project" value="RHEA"/>
</dbReference>
<dbReference type="GO" id="GO:0008270">
    <property type="term" value="F:zinc ion binding"/>
    <property type="evidence" value="ECO:0007669"/>
    <property type="project" value="Ensembl"/>
</dbReference>
<dbReference type="GO" id="GO:0038166">
    <property type="term" value="P:angiotensin-activated signaling pathway"/>
    <property type="evidence" value="ECO:0000250"/>
    <property type="project" value="UniProtKB"/>
</dbReference>
<dbReference type="GO" id="GO:0015670">
    <property type="term" value="P:carbon dioxide transport"/>
    <property type="evidence" value="ECO:0000315"/>
    <property type="project" value="MGI"/>
</dbReference>
<dbReference type="GO" id="GO:0071498">
    <property type="term" value="P:cellular response to fluid shear stress"/>
    <property type="evidence" value="ECO:0007669"/>
    <property type="project" value="Ensembl"/>
</dbReference>
<dbReference type="GO" id="GO:0044849">
    <property type="term" value="P:estrous cycle"/>
    <property type="evidence" value="ECO:0007669"/>
    <property type="project" value="Ensembl"/>
</dbReference>
<dbReference type="GO" id="GO:0001822">
    <property type="term" value="P:kidney development"/>
    <property type="evidence" value="ECO:0007669"/>
    <property type="project" value="Ensembl"/>
</dbReference>
<dbReference type="GO" id="GO:0002009">
    <property type="term" value="P:morphogenesis of an epithelium"/>
    <property type="evidence" value="ECO:0000315"/>
    <property type="project" value="MGI"/>
</dbReference>
<dbReference type="GO" id="GO:0070050">
    <property type="term" value="P:neuron cellular homeostasis"/>
    <property type="evidence" value="ECO:0000315"/>
    <property type="project" value="MGI"/>
</dbReference>
<dbReference type="GO" id="GO:0042475">
    <property type="term" value="P:odontogenesis of dentin-containing tooth"/>
    <property type="evidence" value="ECO:0007669"/>
    <property type="project" value="Ensembl"/>
</dbReference>
<dbReference type="GO" id="GO:0045780">
    <property type="term" value="P:positive regulation of bone resorption"/>
    <property type="evidence" value="ECO:0007669"/>
    <property type="project" value="Ensembl"/>
</dbReference>
<dbReference type="GO" id="GO:0032849">
    <property type="term" value="P:positive regulation of cellular pH reduction"/>
    <property type="evidence" value="ECO:0000315"/>
    <property type="project" value="MGI"/>
</dbReference>
<dbReference type="GO" id="GO:2001150">
    <property type="term" value="P:positive regulation of dipeptide transmembrane transport"/>
    <property type="evidence" value="ECO:0000315"/>
    <property type="project" value="UniProtKB"/>
</dbReference>
<dbReference type="GO" id="GO:0045672">
    <property type="term" value="P:positive regulation of osteoclast differentiation"/>
    <property type="evidence" value="ECO:0007669"/>
    <property type="project" value="Ensembl"/>
</dbReference>
<dbReference type="GO" id="GO:0032230">
    <property type="term" value="P:positive regulation of synaptic transmission, GABAergic"/>
    <property type="evidence" value="ECO:0000316"/>
    <property type="project" value="MGI"/>
</dbReference>
<dbReference type="GO" id="GO:2001225">
    <property type="term" value="P:regulation of chloride transport"/>
    <property type="evidence" value="ECO:0000315"/>
    <property type="project" value="MGI"/>
</dbReference>
<dbReference type="GO" id="GO:0051453">
    <property type="term" value="P:regulation of intracellular pH"/>
    <property type="evidence" value="ECO:0000315"/>
    <property type="project" value="UniProtKB"/>
</dbReference>
<dbReference type="GO" id="GO:0044070">
    <property type="term" value="P:regulation of monoatomic anion transport"/>
    <property type="evidence" value="ECO:0000250"/>
    <property type="project" value="UniProtKB"/>
</dbReference>
<dbReference type="GO" id="GO:0006885">
    <property type="term" value="P:regulation of pH"/>
    <property type="evidence" value="ECO:0000305"/>
    <property type="project" value="MGI"/>
</dbReference>
<dbReference type="GO" id="GO:0043627">
    <property type="term" value="P:response to estrogen"/>
    <property type="evidence" value="ECO:0007669"/>
    <property type="project" value="Ensembl"/>
</dbReference>
<dbReference type="GO" id="GO:1904404">
    <property type="term" value="P:response to formaldehyde"/>
    <property type="evidence" value="ECO:0007669"/>
    <property type="project" value="Ensembl"/>
</dbReference>
<dbReference type="GO" id="GO:0009268">
    <property type="term" value="P:response to pH"/>
    <property type="evidence" value="ECO:0007669"/>
    <property type="project" value="Ensembl"/>
</dbReference>
<dbReference type="GO" id="GO:0048545">
    <property type="term" value="P:response to steroid hormone"/>
    <property type="evidence" value="ECO:0007669"/>
    <property type="project" value="Ensembl"/>
</dbReference>
<dbReference type="GO" id="GO:0010043">
    <property type="term" value="P:response to zinc ion"/>
    <property type="evidence" value="ECO:0007669"/>
    <property type="project" value="Ensembl"/>
</dbReference>
<dbReference type="GO" id="GO:0046903">
    <property type="term" value="P:secretion"/>
    <property type="evidence" value="ECO:0000315"/>
    <property type="project" value="MGI"/>
</dbReference>
<dbReference type="FunFam" id="3.10.200.10:FF:000001">
    <property type="entry name" value="Carbonic anhydrase 2"/>
    <property type="match status" value="1"/>
</dbReference>
<dbReference type="Gene3D" id="3.10.200.10">
    <property type="entry name" value="Alpha carbonic anhydrase"/>
    <property type="match status" value="1"/>
</dbReference>
<dbReference type="InterPro" id="IPR001148">
    <property type="entry name" value="CA_dom"/>
</dbReference>
<dbReference type="InterPro" id="IPR036398">
    <property type="entry name" value="CA_dom_sf"/>
</dbReference>
<dbReference type="InterPro" id="IPR023561">
    <property type="entry name" value="Carbonic_anhydrase_a-class"/>
</dbReference>
<dbReference type="InterPro" id="IPR018338">
    <property type="entry name" value="Carbonic_anhydrase_a-class_CS"/>
</dbReference>
<dbReference type="PANTHER" id="PTHR18952">
    <property type="entry name" value="CARBONIC ANHYDRASE"/>
    <property type="match status" value="1"/>
</dbReference>
<dbReference type="PANTHER" id="PTHR18952:SF120">
    <property type="entry name" value="CARBONIC ANHYDRASE 2"/>
    <property type="match status" value="1"/>
</dbReference>
<dbReference type="Pfam" id="PF00194">
    <property type="entry name" value="Carb_anhydrase"/>
    <property type="match status" value="1"/>
</dbReference>
<dbReference type="SMART" id="SM01057">
    <property type="entry name" value="Carb_anhydrase"/>
    <property type="match status" value="1"/>
</dbReference>
<dbReference type="SUPFAM" id="SSF51069">
    <property type="entry name" value="Carbonic anhydrase"/>
    <property type="match status" value="1"/>
</dbReference>
<dbReference type="PROSITE" id="PS00162">
    <property type="entry name" value="ALPHA_CA_1"/>
    <property type="match status" value="1"/>
</dbReference>
<dbReference type="PROSITE" id="PS51144">
    <property type="entry name" value="ALPHA_CA_2"/>
    <property type="match status" value="1"/>
</dbReference>